<organism>
    <name type="scientific">Pisaster brevispinus</name>
    <name type="common">Short spined sea star</name>
    <name type="synonym">Asterias brevispina</name>
    <dbReference type="NCBI Taxonomy" id="7611"/>
    <lineage>
        <taxon>Eukaryota</taxon>
        <taxon>Metazoa</taxon>
        <taxon>Echinodermata</taxon>
        <taxon>Eleutherozoa</taxon>
        <taxon>Asterozoa</taxon>
        <taxon>Asteroidea</taxon>
        <taxon>Forcipulatacea</taxon>
        <taxon>Forcipulatida</taxon>
        <taxon>Asteriidae</taxon>
        <taxon>Pisaster</taxon>
    </lineage>
</organism>
<dbReference type="EMBL" id="X07504">
    <property type="protein sequence ID" value="CAA30387.1"/>
    <property type="molecule type" value="Genomic_DNA"/>
</dbReference>
<dbReference type="EMBL" id="X54112">
    <property type="protein sequence ID" value="CAA38050.1"/>
    <property type="molecule type" value="Genomic_DNA"/>
</dbReference>
<dbReference type="PIR" id="S01196">
    <property type="entry name" value="S01196"/>
</dbReference>
<dbReference type="SMR" id="P69074"/>
<dbReference type="GO" id="GO:0000786">
    <property type="term" value="C:nucleosome"/>
    <property type="evidence" value="ECO:0007669"/>
    <property type="project" value="UniProtKB-KW"/>
</dbReference>
<dbReference type="GO" id="GO:0005634">
    <property type="term" value="C:nucleus"/>
    <property type="evidence" value="ECO:0007669"/>
    <property type="project" value="UniProtKB-SubCell"/>
</dbReference>
<dbReference type="GO" id="GO:0003677">
    <property type="term" value="F:DNA binding"/>
    <property type="evidence" value="ECO:0007669"/>
    <property type="project" value="UniProtKB-KW"/>
</dbReference>
<dbReference type="GO" id="GO:0046982">
    <property type="term" value="F:protein heterodimerization activity"/>
    <property type="evidence" value="ECO:0007669"/>
    <property type="project" value="InterPro"/>
</dbReference>
<dbReference type="GO" id="GO:0030527">
    <property type="term" value="F:structural constituent of chromatin"/>
    <property type="evidence" value="ECO:0007669"/>
    <property type="project" value="InterPro"/>
</dbReference>
<dbReference type="CDD" id="cd22911">
    <property type="entry name" value="HFD_H3"/>
    <property type="match status" value="1"/>
</dbReference>
<dbReference type="FunFam" id="1.10.20.10:FF:000078">
    <property type="entry name" value="Histone H3"/>
    <property type="match status" value="1"/>
</dbReference>
<dbReference type="FunFam" id="1.10.20.10:FF:000044">
    <property type="entry name" value="Histone H3.3"/>
    <property type="match status" value="1"/>
</dbReference>
<dbReference type="Gene3D" id="1.10.20.10">
    <property type="entry name" value="Histone, subunit A"/>
    <property type="match status" value="1"/>
</dbReference>
<dbReference type="InterPro" id="IPR009072">
    <property type="entry name" value="Histone-fold"/>
</dbReference>
<dbReference type="InterPro" id="IPR007125">
    <property type="entry name" value="Histone_H2A/H2B/H3"/>
</dbReference>
<dbReference type="InterPro" id="IPR000164">
    <property type="entry name" value="Histone_H3/CENP-A"/>
</dbReference>
<dbReference type="PANTHER" id="PTHR11426">
    <property type="entry name" value="HISTONE H3"/>
    <property type="match status" value="1"/>
</dbReference>
<dbReference type="Pfam" id="PF00125">
    <property type="entry name" value="Histone"/>
    <property type="match status" value="1"/>
</dbReference>
<dbReference type="PRINTS" id="PR00622">
    <property type="entry name" value="HISTONEH3"/>
</dbReference>
<dbReference type="SMART" id="SM00428">
    <property type="entry name" value="H3"/>
    <property type="match status" value="1"/>
</dbReference>
<dbReference type="SUPFAM" id="SSF47113">
    <property type="entry name" value="Histone-fold"/>
    <property type="match status" value="1"/>
</dbReference>
<dbReference type="PROSITE" id="PS00322">
    <property type="entry name" value="HISTONE_H3_1"/>
    <property type="match status" value="1"/>
</dbReference>
<dbReference type="PROSITE" id="PS00959">
    <property type="entry name" value="HISTONE_H3_2"/>
    <property type="match status" value="1"/>
</dbReference>
<sequence length="136" mass="15402">MARTKQTARKSTGGKAPRKQLATKAARKSAPATGGVKKPHRYRPGTVALREIRRYQKSTELLIRKLPFQRLVREIAQDFKTELRFQSSAVMALQEASEAYLVGLFEDTNLCAIHAKRVTIMPKDIQLARRIRGERA</sequence>
<protein>
    <recommendedName>
        <fullName>Histone H3, embryonic</fullName>
    </recommendedName>
</protein>
<comment type="function">
    <text>Core component of nucleosome. Nucleosomes wrap and compact DNA into chromatin, limiting DNA accessibility to the cellular machineries which require DNA as a template. Histones thereby play a central role in transcription regulation, DNA repair, DNA replication and chromosomal stability. DNA accessibility is regulated via a complex set of post-translational modifications of histones, also called histone code, and nucleosome remodeling.</text>
</comment>
<comment type="subunit">
    <text>The nucleosome is a histone octamer containing two molecules each of H2A, H2B, H3 and H4 assembled in one H3-H4 heterotetramer and two H2A-H2B heterodimers. The octamer wraps approximately 147 bp of DNA.</text>
</comment>
<comment type="subcellular location">
    <subcellularLocation>
        <location evidence="1">Nucleus</location>
    </subcellularLocation>
    <subcellularLocation>
        <location evidence="1">Chromosome</location>
    </subcellularLocation>
</comment>
<comment type="developmental stage">
    <text>This histone is expressed during late embryonic development.</text>
</comment>
<comment type="PTM">
    <text evidence="1">Acetylation is generally linked to gene activation.</text>
</comment>
<comment type="PTM">
    <text evidence="1">Methylation at Lys-5 is linked to gene activation. Methylation at Lys-10 is linked to gene repression (By similarity).</text>
</comment>
<comment type="similarity">
    <text evidence="3">Belongs to the histone H3 family.</text>
</comment>
<proteinExistence type="evidence at transcript level"/>
<name>H3_PISBR</name>
<feature type="initiator methionine" description="Removed" evidence="1">
    <location>
        <position position="1"/>
    </location>
</feature>
<feature type="chain" id="PRO_0000221314" description="Histone H3, embryonic">
    <location>
        <begin position="2"/>
        <end position="136"/>
    </location>
</feature>
<feature type="region of interest" description="Disordered" evidence="2">
    <location>
        <begin position="1"/>
        <end position="43"/>
    </location>
</feature>
<feature type="modified residue" description="N6-methylated lysine" evidence="1">
    <location>
        <position position="5"/>
    </location>
</feature>
<feature type="modified residue" description="N6-acetyllysine; alternate" evidence="1">
    <location>
        <position position="10"/>
    </location>
</feature>
<feature type="modified residue" description="N6-methylated lysine; alternate" evidence="1">
    <location>
        <position position="10"/>
    </location>
</feature>
<feature type="modified residue" description="Phosphoserine" evidence="1">
    <location>
        <position position="11"/>
    </location>
</feature>
<feature type="modified residue" description="N6-acetyllysine" evidence="1">
    <location>
        <position position="15"/>
    </location>
</feature>
<feature type="modified residue" description="N6-acetyllysine" evidence="1">
    <location>
        <position position="24"/>
    </location>
</feature>
<feature type="modified residue" description="N6-methylated lysine" evidence="1">
    <location>
        <position position="28"/>
    </location>
</feature>
<feature type="modified residue" description="N6-methylated lysine" evidence="1">
    <location>
        <position position="37"/>
    </location>
</feature>
<feature type="modified residue" description="N6-methylated lysine" evidence="1">
    <location>
        <position position="80"/>
    </location>
</feature>
<evidence type="ECO:0000250" key="1"/>
<evidence type="ECO:0000256" key="2">
    <source>
        <dbReference type="SAM" id="MobiDB-lite"/>
    </source>
</evidence>
<evidence type="ECO:0000305" key="3"/>
<accession>P69074</accession>
<accession>P02298</accession>
<accession>P05320</accession>
<accession>P05321</accession>
<accession>P05322</accession>
<reference key="1">
    <citation type="journal article" date="1988" name="J. Mol. Evol.">
        <title>Histone genes in three sea star species: cluster arrangement, transcriptional polarity, and analyses of the flanking regions of H3 and H4 genes.</title>
        <authorList>
            <person name="Banfield D.C.D."/>
            <person name="Honda B.M."/>
            <person name="Smith M.J."/>
        </authorList>
    </citation>
    <scope>NUCLEOTIDE SEQUENCE [GENOMIC DNA]</scope>
    <source>
        <tissue>Sperm</tissue>
    </source>
</reference>
<reference key="2">
    <citation type="submission" date="1990-07" db="EMBL/GenBank/DDBJ databases">
        <title>Sequence and organisation of histone gene clusters in sea stars.</title>
        <authorList>
            <person name="Wu Y."/>
            <person name="Kowbel D."/>
            <person name="Smith M.J."/>
        </authorList>
    </citation>
    <scope>NUCLEOTIDE SEQUENCE [GENOMIC DNA]</scope>
</reference>
<keyword id="KW-0007">Acetylation</keyword>
<keyword id="KW-0158">Chromosome</keyword>
<keyword id="KW-0238">DNA-binding</keyword>
<keyword id="KW-0488">Methylation</keyword>
<keyword id="KW-0544">Nucleosome core</keyword>
<keyword id="KW-0539">Nucleus</keyword>
<keyword id="KW-0597">Phosphoprotein</keyword>